<sequence>MSHTVKIYDTCIGCTQCVRACPTDVLEMVPWDGCKAGQIASSPRTEDCVGCKRCETACPTDFLSIRVYLGAETTRSMGLAY</sequence>
<name>PSAC_ACAM1</name>
<keyword id="KW-0002">3D-structure</keyword>
<keyword id="KW-0004">4Fe-4S</keyword>
<keyword id="KW-0249">Electron transport</keyword>
<keyword id="KW-0408">Iron</keyword>
<keyword id="KW-0411">Iron-sulfur</keyword>
<keyword id="KW-0472">Membrane</keyword>
<keyword id="KW-0479">Metal-binding</keyword>
<keyword id="KW-0560">Oxidoreductase</keyword>
<keyword id="KW-0602">Photosynthesis</keyword>
<keyword id="KW-0603">Photosystem I</keyword>
<keyword id="KW-1185">Reference proteome</keyword>
<keyword id="KW-0677">Repeat</keyword>
<keyword id="KW-0793">Thylakoid</keyword>
<keyword id="KW-0813">Transport</keyword>
<evidence type="ECO:0000255" key="1">
    <source>
        <dbReference type="HAMAP-Rule" id="MF_01303"/>
    </source>
</evidence>
<evidence type="ECO:0007829" key="2">
    <source>
        <dbReference type="PDB" id="7DWQ"/>
    </source>
</evidence>
<comment type="function">
    <text evidence="1">Apoprotein for the two 4Fe-4S centers FA and FB of photosystem I (PSI); essential for photochemical activity. FB is the terminal electron acceptor of PSI, donating electrons to ferredoxin. The C-terminus interacts with PsaA/B/D and helps assemble the protein into the PSI complex. Required for binding of PsaD and PsaE to PSI. PSI is a plastocyanin/cytochrome c6-ferredoxin oxidoreductase, converting photonic excitation into a charge separation, which transfers an electron from the donor P700 chlorophyll pair to the spectroscopically characterized acceptors A0, A1, FX, FA and FB in turn.</text>
</comment>
<comment type="catalytic activity">
    <reaction evidence="1">
        <text>reduced [plastocyanin] + hnu + oxidized [2Fe-2S]-[ferredoxin] = oxidized [plastocyanin] + reduced [2Fe-2S]-[ferredoxin]</text>
        <dbReference type="Rhea" id="RHEA:30407"/>
        <dbReference type="Rhea" id="RHEA-COMP:10000"/>
        <dbReference type="Rhea" id="RHEA-COMP:10001"/>
        <dbReference type="Rhea" id="RHEA-COMP:10039"/>
        <dbReference type="Rhea" id="RHEA-COMP:10040"/>
        <dbReference type="ChEBI" id="CHEBI:29036"/>
        <dbReference type="ChEBI" id="CHEBI:30212"/>
        <dbReference type="ChEBI" id="CHEBI:33737"/>
        <dbReference type="ChEBI" id="CHEBI:33738"/>
        <dbReference type="ChEBI" id="CHEBI:49552"/>
        <dbReference type="EC" id="1.97.1.12"/>
    </reaction>
</comment>
<comment type="cofactor">
    <cofactor evidence="1">
        <name>[4Fe-4S] cluster</name>
        <dbReference type="ChEBI" id="CHEBI:49883"/>
    </cofactor>
    <text evidence="1">Binds 2 [4Fe-4S] clusters. Cluster 2 is most probably the spectroscopically characterized electron acceptor FA and cluster 1 is most probably FB.</text>
</comment>
<comment type="subunit">
    <text evidence="1">The cyanobacterial PSI reaction center is composed of one copy each of PsaA,B,C,D,E,F,I,J,K,L,M and X, and forms trimeric complexes.</text>
</comment>
<comment type="subcellular location">
    <subcellularLocation>
        <location evidence="1">Cellular thylakoid membrane</location>
        <topology evidence="1">Peripheral membrane protein</topology>
        <orientation evidence="1">Cytoplasmic side</orientation>
    </subcellularLocation>
</comment>
<gene>
    <name evidence="1" type="primary">psaC</name>
    <name type="ordered locus">AM1_1660</name>
</gene>
<proteinExistence type="evidence at protein level"/>
<organism>
    <name type="scientific">Acaryochloris marina (strain MBIC 11017)</name>
    <dbReference type="NCBI Taxonomy" id="329726"/>
    <lineage>
        <taxon>Bacteria</taxon>
        <taxon>Bacillati</taxon>
        <taxon>Cyanobacteriota</taxon>
        <taxon>Cyanophyceae</taxon>
        <taxon>Acaryochloridales</taxon>
        <taxon>Acaryochloridaceae</taxon>
        <taxon>Acaryochloris</taxon>
    </lineage>
</organism>
<dbReference type="EC" id="1.97.1.12" evidence="1"/>
<dbReference type="EMBL" id="CP000828">
    <property type="protein sequence ID" value="ABW26681.1"/>
    <property type="molecule type" value="Genomic_DNA"/>
</dbReference>
<dbReference type="RefSeq" id="WP_009556083.1">
    <property type="nucleotide sequence ID" value="NC_009925.1"/>
</dbReference>
<dbReference type="PDB" id="7COY">
    <property type="method" value="EM"/>
    <property type="resolution" value="2.50 A"/>
    <property type="chains" value="aC/bC/cC=1-81"/>
</dbReference>
<dbReference type="PDB" id="7DWQ">
    <property type="method" value="EM"/>
    <property type="resolution" value="3.30 A"/>
    <property type="chains" value="C=1-81"/>
</dbReference>
<dbReference type="PDBsum" id="7COY"/>
<dbReference type="PDBsum" id="7DWQ"/>
<dbReference type="EMDB" id="EMD-30420"/>
<dbReference type="EMDB" id="EMD-30882"/>
<dbReference type="SMR" id="B0CB42"/>
<dbReference type="STRING" id="329726.AM1_1660"/>
<dbReference type="TCDB" id="5.B.4.1.2">
    <property type="family name" value="the plant photosystem i supercomplex (psi) family"/>
</dbReference>
<dbReference type="KEGG" id="amr:AM1_1660"/>
<dbReference type="eggNOG" id="COG1143">
    <property type="taxonomic scope" value="Bacteria"/>
</dbReference>
<dbReference type="HOGENOM" id="CLU_139698_8_0_3"/>
<dbReference type="OrthoDB" id="9804603at2"/>
<dbReference type="Proteomes" id="UP000000268">
    <property type="component" value="Chromosome"/>
</dbReference>
<dbReference type="GO" id="GO:0009522">
    <property type="term" value="C:photosystem I"/>
    <property type="evidence" value="ECO:0007669"/>
    <property type="project" value="UniProtKB-KW"/>
</dbReference>
<dbReference type="GO" id="GO:0031676">
    <property type="term" value="C:plasma membrane-derived thylakoid membrane"/>
    <property type="evidence" value="ECO:0007669"/>
    <property type="project" value="UniProtKB-SubCell"/>
</dbReference>
<dbReference type="GO" id="GO:0051539">
    <property type="term" value="F:4 iron, 4 sulfur cluster binding"/>
    <property type="evidence" value="ECO:0007669"/>
    <property type="project" value="UniProtKB-KW"/>
</dbReference>
<dbReference type="GO" id="GO:0009055">
    <property type="term" value="F:electron transfer activity"/>
    <property type="evidence" value="ECO:0007669"/>
    <property type="project" value="UniProtKB-UniRule"/>
</dbReference>
<dbReference type="GO" id="GO:0046872">
    <property type="term" value="F:metal ion binding"/>
    <property type="evidence" value="ECO:0007669"/>
    <property type="project" value="UniProtKB-KW"/>
</dbReference>
<dbReference type="GO" id="GO:0016491">
    <property type="term" value="F:oxidoreductase activity"/>
    <property type="evidence" value="ECO:0007669"/>
    <property type="project" value="UniProtKB-KW"/>
</dbReference>
<dbReference type="GO" id="GO:0009773">
    <property type="term" value="P:photosynthetic electron transport in photosystem I"/>
    <property type="evidence" value="ECO:0007669"/>
    <property type="project" value="InterPro"/>
</dbReference>
<dbReference type="FunFam" id="3.30.70.20:FF:000001">
    <property type="entry name" value="Photosystem I iron-sulfur center"/>
    <property type="match status" value="1"/>
</dbReference>
<dbReference type="Gene3D" id="3.30.70.20">
    <property type="match status" value="1"/>
</dbReference>
<dbReference type="HAMAP" id="MF_01303">
    <property type="entry name" value="PSI_PsaC"/>
    <property type="match status" value="1"/>
</dbReference>
<dbReference type="InterPro" id="IPR017896">
    <property type="entry name" value="4Fe4S_Fe-S-bd"/>
</dbReference>
<dbReference type="InterPro" id="IPR017900">
    <property type="entry name" value="4Fe4S_Fe_S_CS"/>
</dbReference>
<dbReference type="InterPro" id="IPR050157">
    <property type="entry name" value="PSI_iron-sulfur_center"/>
</dbReference>
<dbReference type="InterPro" id="IPR017491">
    <property type="entry name" value="PSI_PsaC"/>
</dbReference>
<dbReference type="NCBIfam" id="TIGR03048">
    <property type="entry name" value="PS_I_psaC"/>
    <property type="match status" value="1"/>
</dbReference>
<dbReference type="PANTHER" id="PTHR24960:SF79">
    <property type="entry name" value="PHOTOSYSTEM I IRON-SULFUR CENTER"/>
    <property type="match status" value="1"/>
</dbReference>
<dbReference type="PANTHER" id="PTHR24960">
    <property type="entry name" value="PHOTOSYSTEM I IRON-SULFUR CENTER-RELATED"/>
    <property type="match status" value="1"/>
</dbReference>
<dbReference type="Pfam" id="PF12838">
    <property type="entry name" value="Fer4_7"/>
    <property type="match status" value="1"/>
</dbReference>
<dbReference type="SUPFAM" id="SSF54862">
    <property type="entry name" value="4Fe-4S ferredoxins"/>
    <property type="match status" value="1"/>
</dbReference>
<dbReference type="PROSITE" id="PS00198">
    <property type="entry name" value="4FE4S_FER_1"/>
    <property type="match status" value="2"/>
</dbReference>
<dbReference type="PROSITE" id="PS51379">
    <property type="entry name" value="4FE4S_FER_2"/>
    <property type="match status" value="2"/>
</dbReference>
<reference key="1">
    <citation type="journal article" date="2008" name="Proc. Natl. Acad. Sci. U.S.A.">
        <title>Niche adaptation and genome expansion in the chlorophyll d-producing cyanobacterium Acaryochloris marina.</title>
        <authorList>
            <person name="Swingley W.D."/>
            <person name="Chen M."/>
            <person name="Cheung P.C."/>
            <person name="Conrad A.L."/>
            <person name="Dejesa L.C."/>
            <person name="Hao J."/>
            <person name="Honchak B.M."/>
            <person name="Karbach L.E."/>
            <person name="Kurdoglu A."/>
            <person name="Lahiri S."/>
            <person name="Mastrian S.D."/>
            <person name="Miyashita H."/>
            <person name="Page L."/>
            <person name="Ramakrishna P."/>
            <person name="Satoh S."/>
            <person name="Sattley W.M."/>
            <person name="Shimada Y."/>
            <person name="Taylor H.L."/>
            <person name="Tomo T."/>
            <person name="Tsuchiya T."/>
            <person name="Wang Z.T."/>
            <person name="Raymond J."/>
            <person name="Mimuro M."/>
            <person name="Blankenship R.E."/>
            <person name="Touchman J.W."/>
        </authorList>
    </citation>
    <scope>NUCLEOTIDE SEQUENCE [LARGE SCALE GENOMIC DNA]</scope>
    <source>
        <strain>MBIC 11017</strain>
    </source>
</reference>
<protein>
    <recommendedName>
        <fullName evidence="1">Photosystem I iron-sulfur center</fullName>
        <ecNumber evidence="1">1.97.1.12</ecNumber>
    </recommendedName>
    <alternativeName>
        <fullName evidence="1">9 kDa polypeptide</fullName>
    </alternativeName>
    <alternativeName>
        <fullName evidence="1">PSI-C</fullName>
    </alternativeName>
    <alternativeName>
        <fullName evidence="1">Photosystem I subunit VII</fullName>
    </alternativeName>
    <alternativeName>
        <fullName evidence="1">PsaC</fullName>
    </alternativeName>
</protein>
<accession>B0CB42</accession>
<feature type="chain" id="PRO_1000085952" description="Photosystem I iron-sulfur center">
    <location>
        <begin position="1"/>
        <end position="81"/>
    </location>
</feature>
<feature type="domain" description="4Fe-4S ferredoxin-type 1" evidence="1">
    <location>
        <begin position="1"/>
        <end position="31"/>
    </location>
</feature>
<feature type="domain" description="4Fe-4S ferredoxin-type 2" evidence="1">
    <location>
        <begin position="37"/>
        <end position="68"/>
    </location>
</feature>
<feature type="binding site" evidence="1">
    <location>
        <position position="11"/>
    </location>
    <ligand>
        <name>[4Fe-4S] cluster</name>
        <dbReference type="ChEBI" id="CHEBI:49883"/>
        <label>1</label>
    </ligand>
</feature>
<feature type="binding site" evidence="1">
    <location>
        <position position="14"/>
    </location>
    <ligand>
        <name>[4Fe-4S] cluster</name>
        <dbReference type="ChEBI" id="CHEBI:49883"/>
        <label>1</label>
    </ligand>
</feature>
<feature type="binding site" evidence="1">
    <location>
        <position position="17"/>
    </location>
    <ligand>
        <name>[4Fe-4S] cluster</name>
        <dbReference type="ChEBI" id="CHEBI:49883"/>
        <label>1</label>
    </ligand>
</feature>
<feature type="binding site" evidence="1">
    <location>
        <position position="21"/>
    </location>
    <ligand>
        <name>[4Fe-4S] cluster</name>
        <dbReference type="ChEBI" id="CHEBI:49883"/>
        <label>2</label>
    </ligand>
</feature>
<feature type="binding site" evidence="1">
    <location>
        <position position="48"/>
    </location>
    <ligand>
        <name>[4Fe-4S] cluster</name>
        <dbReference type="ChEBI" id="CHEBI:49883"/>
        <label>2</label>
    </ligand>
</feature>
<feature type="binding site" evidence="1">
    <location>
        <position position="51"/>
    </location>
    <ligand>
        <name>[4Fe-4S] cluster</name>
        <dbReference type="ChEBI" id="CHEBI:49883"/>
        <label>2</label>
    </ligand>
</feature>
<feature type="binding site" evidence="1">
    <location>
        <position position="54"/>
    </location>
    <ligand>
        <name>[4Fe-4S] cluster</name>
        <dbReference type="ChEBI" id="CHEBI:49883"/>
        <label>2</label>
    </ligand>
</feature>
<feature type="binding site" evidence="1">
    <location>
        <position position="58"/>
    </location>
    <ligand>
        <name>[4Fe-4S] cluster</name>
        <dbReference type="ChEBI" id="CHEBI:49883"/>
        <label>1</label>
    </ligand>
</feature>
<feature type="strand" evidence="2">
    <location>
        <begin position="4"/>
        <end position="7"/>
    </location>
</feature>
<feature type="helix" evidence="2">
    <location>
        <begin position="16"/>
        <end position="20"/>
    </location>
</feature>
<feature type="strand" evidence="2">
    <location>
        <begin position="27"/>
        <end position="30"/>
    </location>
</feature>
<feature type="strand" evidence="2">
    <location>
        <begin position="37"/>
        <end position="41"/>
    </location>
</feature>
<feature type="helix" evidence="2">
    <location>
        <begin position="45"/>
        <end position="47"/>
    </location>
</feature>
<feature type="helix" evidence="2">
    <location>
        <begin position="53"/>
        <end position="57"/>
    </location>
</feature>
<feature type="strand" evidence="2">
    <location>
        <begin position="64"/>
        <end position="68"/>
    </location>
</feature>
<feature type="turn" evidence="2">
    <location>
        <begin position="74"/>
        <end position="78"/>
    </location>
</feature>